<proteinExistence type="evidence at transcript level"/>
<dbReference type="EMBL" id="X70088">
    <property type="protein sequence ID" value="CAA49693.1"/>
    <property type="molecule type" value="mRNA"/>
</dbReference>
<dbReference type="PIR" id="S32021">
    <property type="entry name" value="S32021"/>
</dbReference>
<dbReference type="RefSeq" id="XP_016498221.1">
    <property type="nucleotide sequence ID" value="XM_016642735.1"/>
</dbReference>
<dbReference type="SMR" id="Q40519"/>
<dbReference type="STRING" id="4097.Q40519"/>
<dbReference type="PaxDb" id="4097-Q40519"/>
<dbReference type="KEGG" id="nta:107816978"/>
<dbReference type="OMA" id="IYAKDEW"/>
<dbReference type="OrthoDB" id="496093at2759"/>
<dbReference type="PhylomeDB" id="Q40519"/>
<dbReference type="Proteomes" id="UP000084051">
    <property type="component" value="Unplaced"/>
</dbReference>
<dbReference type="GO" id="GO:0009535">
    <property type="term" value="C:chloroplast thylakoid membrane"/>
    <property type="evidence" value="ECO:0007669"/>
    <property type="project" value="UniProtKB-SubCell"/>
</dbReference>
<dbReference type="GO" id="GO:0009654">
    <property type="term" value="C:photosystem II oxygen evolving complex"/>
    <property type="evidence" value="ECO:0007669"/>
    <property type="project" value="InterPro"/>
</dbReference>
<dbReference type="GO" id="GO:0015979">
    <property type="term" value="P:photosynthesis"/>
    <property type="evidence" value="ECO:0007669"/>
    <property type="project" value="UniProtKB-KW"/>
</dbReference>
<dbReference type="InterPro" id="IPR006814">
    <property type="entry name" value="PSII_PsbR"/>
</dbReference>
<dbReference type="PANTHER" id="PTHR34369">
    <property type="entry name" value="PHOTOSYSTEM II 10 KDA POLYPEPTIDE, CHLOROPLASTIC"/>
    <property type="match status" value="1"/>
</dbReference>
<dbReference type="PANTHER" id="PTHR34369:SF2">
    <property type="entry name" value="PHOTOSYSTEM II 10 KDA POLYPEPTIDE, CHLOROPLASTIC"/>
    <property type="match status" value="1"/>
</dbReference>
<dbReference type="Pfam" id="PF04725">
    <property type="entry name" value="PsbR"/>
    <property type="match status" value="1"/>
</dbReference>
<evidence type="ECO:0000250" key="1"/>
<evidence type="ECO:0000305" key="2"/>
<protein>
    <recommendedName>
        <fullName>Photosystem II 10 kDa polypeptide, chloroplastic</fullName>
        <shortName>PII10</shortName>
    </recommendedName>
</protein>
<feature type="transit peptide" description="Chloroplast" evidence="1">
    <location>
        <begin position="1"/>
        <end position="37"/>
    </location>
</feature>
<feature type="chain" id="PRO_0000029366" description="Photosystem II 10 kDa polypeptide, chloroplastic">
    <location>
        <begin position="38"/>
        <end position="136"/>
    </location>
</feature>
<keyword id="KW-0150">Chloroplast</keyword>
<keyword id="KW-0472">Membrane</keyword>
<keyword id="KW-0602">Photosynthesis</keyword>
<keyword id="KW-0604">Photosystem II</keyword>
<keyword id="KW-0934">Plastid</keyword>
<keyword id="KW-1185">Reference proteome</keyword>
<keyword id="KW-0793">Thylakoid</keyword>
<keyword id="KW-0809">Transit peptide</keyword>
<organism>
    <name type="scientific">Nicotiana tabacum</name>
    <name type="common">Common tobacco</name>
    <dbReference type="NCBI Taxonomy" id="4097"/>
    <lineage>
        <taxon>Eukaryota</taxon>
        <taxon>Viridiplantae</taxon>
        <taxon>Streptophyta</taxon>
        <taxon>Embryophyta</taxon>
        <taxon>Tracheophyta</taxon>
        <taxon>Spermatophyta</taxon>
        <taxon>Magnoliopsida</taxon>
        <taxon>eudicotyledons</taxon>
        <taxon>Gunneridae</taxon>
        <taxon>Pentapetalae</taxon>
        <taxon>asterids</taxon>
        <taxon>lamiids</taxon>
        <taxon>Solanales</taxon>
        <taxon>Solanaceae</taxon>
        <taxon>Nicotianoideae</taxon>
        <taxon>Nicotianeae</taxon>
        <taxon>Nicotiana</taxon>
    </lineage>
</organism>
<accession>Q40519</accession>
<gene>
    <name type="primary">PSBR</name>
</gene>
<reference key="1">
    <citation type="journal article" date="1993" name="J. Genet. Breed.">
        <title>Isolation and sequence analysis of cDNA clones encoding the precursor of the 10-kDa polypeptide of photosystem II from tobacco.</title>
        <authorList>
            <person name="Zhou X.R."/>
            <person name="Costantino P."/>
            <person name="de Paolis A."/>
        </authorList>
    </citation>
    <scope>NUCLEOTIDE SEQUENCE [MRNA]</scope>
    <source>
        <strain>cv. SR1</strain>
        <tissue>Leaf</tissue>
    </source>
</reference>
<comment type="function">
    <text>Associated with the oxygen-evolving complex of photosystem II.</text>
</comment>
<comment type="subcellular location">
    <subcellularLocation>
        <location>Plastid</location>
        <location>Chloroplast thylakoid membrane</location>
    </subcellularLocation>
    <text>Associated with the photosystem II complex.</text>
</comment>
<comment type="similarity">
    <text evidence="2">Belongs to the psbR family.</text>
</comment>
<sequence length="136" mass="14169">MASTVMSLKPAPFSVEKTAVKGLPSLARSSSSFRVQASGVKKLKTDKPYGINGSMSLRDGVDASGRKQKGKGVYQFVDKYGANVDGYSPIYNTDDWSPSGDVYVGGTTGLAIWAVTLVGILAGGALLVFNTSALAQ</sequence>
<name>PSBR_TOBAC</name>